<accession>B5RBR3</accession>
<sequence length="359" mass="39699">MSTENTLSVADLARENVRNLVPYQSARRLGGNGDVWLNANEFPTAVEFQLTQQTLNRYPECQPKAVIENYAQYAGVKPEQVLVSRGADEGIELVIRAFCEPGKDAILYCPPTYGMYSVSAETIGVERRTVPALENWQLDLQGISDNLDGTKVVFVCSPNNPTGQLINPQDLRTLLELTRGKAIVVADEAYIEFCPQATLTGWLVEYPHLVILRTLSKAFALAGLRCGFTLANEEVINLLLKVIAPYPLSTPVADIAAQALSPQGINAMRDRVAQTVQERQYLVNALQQTACVEHVFDSETNYILARFTASSSVFKSLWDQGIILRDQNKQPSLSGCLRITVGTRQENQRVIDALRAEPV</sequence>
<dbReference type="EC" id="2.6.1.9" evidence="1"/>
<dbReference type="EMBL" id="AM933173">
    <property type="protein sequence ID" value="CAR37944.1"/>
    <property type="molecule type" value="Genomic_DNA"/>
</dbReference>
<dbReference type="RefSeq" id="WP_000102715.1">
    <property type="nucleotide sequence ID" value="NC_011274.1"/>
</dbReference>
<dbReference type="SMR" id="B5RBR3"/>
<dbReference type="KEGG" id="seg:SG2103"/>
<dbReference type="HOGENOM" id="CLU_017584_3_1_6"/>
<dbReference type="UniPathway" id="UPA00031">
    <property type="reaction ID" value="UER00012"/>
</dbReference>
<dbReference type="Proteomes" id="UP000008321">
    <property type="component" value="Chromosome"/>
</dbReference>
<dbReference type="GO" id="GO:0004400">
    <property type="term" value="F:histidinol-phosphate transaminase activity"/>
    <property type="evidence" value="ECO:0007669"/>
    <property type="project" value="UniProtKB-UniRule"/>
</dbReference>
<dbReference type="GO" id="GO:0030170">
    <property type="term" value="F:pyridoxal phosphate binding"/>
    <property type="evidence" value="ECO:0007669"/>
    <property type="project" value="InterPro"/>
</dbReference>
<dbReference type="GO" id="GO:0000105">
    <property type="term" value="P:L-histidine biosynthetic process"/>
    <property type="evidence" value="ECO:0007669"/>
    <property type="project" value="UniProtKB-UniRule"/>
</dbReference>
<dbReference type="CDD" id="cd00609">
    <property type="entry name" value="AAT_like"/>
    <property type="match status" value="1"/>
</dbReference>
<dbReference type="FunFam" id="3.40.640.10:FF:000032">
    <property type="entry name" value="Histidinol-phosphate aminotransferase"/>
    <property type="match status" value="1"/>
</dbReference>
<dbReference type="Gene3D" id="3.90.1150.10">
    <property type="entry name" value="Aspartate Aminotransferase, domain 1"/>
    <property type="match status" value="1"/>
</dbReference>
<dbReference type="Gene3D" id="3.40.640.10">
    <property type="entry name" value="Type I PLP-dependent aspartate aminotransferase-like (Major domain)"/>
    <property type="match status" value="1"/>
</dbReference>
<dbReference type="HAMAP" id="MF_01023">
    <property type="entry name" value="HisC_aminotrans_2"/>
    <property type="match status" value="1"/>
</dbReference>
<dbReference type="InterPro" id="IPR001917">
    <property type="entry name" value="Aminotrans_II_pyridoxalP_BS"/>
</dbReference>
<dbReference type="InterPro" id="IPR004839">
    <property type="entry name" value="Aminotransferase_I/II_large"/>
</dbReference>
<dbReference type="InterPro" id="IPR005861">
    <property type="entry name" value="HisP_aminotrans"/>
</dbReference>
<dbReference type="InterPro" id="IPR015424">
    <property type="entry name" value="PyrdxlP-dep_Trfase"/>
</dbReference>
<dbReference type="InterPro" id="IPR015421">
    <property type="entry name" value="PyrdxlP-dep_Trfase_major"/>
</dbReference>
<dbReference type="InterPro" id="IPR015422">
    <property type="entry name" value="PyrdxlP-dep_Trfase_small"/>
</dbReference>
<dbReference type="NCBIfam" id="TIGR01141">
    <property type="entry name" value="hisC"/>
    <property type="match status" value="1"/>
</dbReference>
<dbReference type="PANTHER" id="PTHR42885:SF2">
    <property type="entry name" value="HISTIDINOL-PHOSPHATE AMINOTRANSFERASE"/>
    <property type="match status" value="1"/>
</dbReference>
<dbReference type="PANTHER" id="PTHR42885">
    <property type="entry name" value="HISTIDINOL-PHOSPHATE AMINOTRANSFERASE-RELATED"/>
    <property type="match status" value="1"/>
</dbReference>
<dbReference type="Pfam" id="PF00155">
    <property type="entry name" value="Aminotran_1_2"/>
    <property type="match status" value="1"/>
</dbReference>
<dbReference type="SUPFAM" id="SSF53383">
    <property type="entry name" value="PLP-dependent transferases"/>
    <property type="match status" value="1"/>
</dbReference>
<dbReference type="PROSITE" id="PS00599">
    <property type="entry name" value="AA_TRANSFER_CLASS_2"/>
    <property type="match status" value="1"/>
</dbReference>
<evidence type="ECO:0000255" key="1">
    <source>
        <dbReference type="HAMAP-Rule" id="MF_01023"/>
    </source>
</evidence>
<keyword id="KW-0028">Amino-acid biosynthesis</keyword>
<keyword id="KW-0032">Aminotransferase</keyword>
<keyword id="KW-0368">Histidine biosynthesis</keyword>
<keyword id="KW-0663">Pyridoxal phosphate</keyword>
<keyword id="KW-0808">Transferase</keyword>
<gene>
    <name evidence="1" type="primary">hisC</name>
    <name type="ordered locus">SG2103</name>
</gene>
<feature type="chain" id="PRO_1000135419" description="Histidinol-phosphate aminotransferase">
    <location>
        <begin position="1"/>
        <end position="359"/>
    </location>
</feature>
<feature type="modified residue" description="N6-(pyridoxal phosphate)lysine" evidence="1">
    <location>
        <position position="217"/>
    </location>
</feature>
<protein>
    <recommendedName>
        <fullName evidence="1">Histidinol-phosphate aminotransferase</fullName>
        <ecNumber evidence="1">2.6.1.9</ecNumber>
    </recommendedName>
    <alternativeName>
        <fullName evidence="1">Imidazole acetol-phosphate transaminase</fullName>
    </alternativeName>
</protein>
<proteinExistence type="inferred from homology"/>
<comment type="catalytic activity">
    <reaction evidence="1">
        <text>L-histidinol phosphate + 2-oxoglutarate = 3-(imidazol-4-yl)-2-oxopropyl phosphate + L-glutamate</text>
        <dbReference type="Rhea" id="RHEA:23744"/>
        <dbReference type="ChEBI" id="CHEBI:16810"/>
        <dbReference type="ChEBI" id="CHEBI:29985"/>
        <dbReference type="ChEBI" id="CHEBI:57766"/>
        <dbReference type="ChEBI" id="CHEBI:57980"/>
        <dbReference type="EC" id="2.6.1.9"/>
    </reaction>
</comment>
<comment type="cofactor">
    <cofactor evidence="1">
        <name>pyridoxal 5'-phosphate</name>
        <dbReference type="ChEBI" id="CHEBI:597326"/>
    </cofactor>
</comment>
<comment type="pathway">
    <text evidence="1">Amino-acid biosynthesis; L-histidine biosynthesis; L-histidine from 5-phospho-alpha-D-ribose 1-diphosphate: step 7/9.</text>
</comment>
<comment type="subunit">
    <text evidence="1">Homodimer.</text>
</comment>
<comment type="similarity">
    <text evidence="1">Belongs to the class-II pyridoxal-phosphate-dependent aminotransferase family. Histidinol-phosphate aminotransferase subfamily.</text>
</comment>
<reference key="1">
    <citation type="journal article" date="2008" name="Genome Res.">
        <title>Comparative genome analysis of Salmonella enteritidis PT4 and Salmonella gallinarum 287/91 provides insights into evolutionary and host adaptation pathways.</title>
        <authorList>
            <person name="Thomson N.R."/>
            <person name="Clayton D.J."/>
            <person name="Windhorst D."/>
            <person name="Vernikos G."/>
            <person name="Davidson S."/>
            <person name="Churcher C."/>
            <person name="Quail M.A."/>
            <person name="Stevens M."/>
            <person name="Jones M.A."/>
            <person name="Watson M."/>
            <person name="Barron A."/>
            <person name="Layton A."/>
            <person name="Pickard D."/>
            <person name="Kingsley R.A."/>
            <person name="Bignell A."/>
            <person name="Clark L."/>
            <person name="Harris B."/>
            <person name="Ormond D."/>
            <person name="Abdellah Z."/>
            <person name="Brooks K."/>
            <person name="Cherevach I."/>
            <person name="Chillingworth T."/>
            <person name="Woodward J."/>
            <person name="Norberczak H."/>
            <person name="Lord A."/>
            <person name="Arrowsmith C."/>
            <person name="Jagels K."/>
            <person name="Moule S."/>
            <person name="Mungall K."/>
            <person name="Saunders M."/>
            <person name="Whitehead S."/>
            <person name="Chabalgoity J.A."/>
            <person name="Maskell D."/>
            <person name="Humphreys T."/>
            <person name="Roberts M."/>
            <person name="Barrow P.A."/>
            <person name="Dougan G."/>
            <person name="Parkhill J."/>
        </authorList>
    </citation>
    <scope>NUCLEOTIDE SEQUENCE [LARGE SCALE GENOMIC DNA]</scope>
    <source>
        <strain>287/91 / NCTC 13346</strain>
    </source>
</reference>
<name>HIS8_SALG2</name>
<organism>
    <name type="scientific">Salmonella gallinarum (strain 287/91 / NCTC 13346)</name>
    <dbReference type="NCBI Taxonomy" id="550538"/>
    <lineage>
        <taxon>Bacteria</taxon>
        <taxon>Pseudomonadati</taxon>
        <taxon>Pseudomonadota</taxon>
        <taxon>Gammaproteobacteria</taxon>
        <taxon>Enterobacterales</taxon>
        <taxon>Enterobacteriaceae</taxon>
        <taxon>Salmonella</taxon>
    </lineage>
</organism>